<evidence type="ECO:0000255" key="1">
    <source>
        <dbReference type="HAMAP-Rule" id="MF_00291"/>
    </source>
</evidence>
<evidence type="ECO:0000305" key="2"/>
<accession>B1KNU3</accession>
<name>RS2_SHEWM</name>
<reference key="1">
    <citation type="submission" date="2008-02" db="EMBL/GenBank/DDBJ databases">
        <title>Complete sequence of Shewanella woodyi ATCC 51908.</title>
        <authorList>
            <consortium name="US DOE Joint Genome Institute"/>
            <person name="Copeland A."/>
            <person name="Lucas S."/>
            <person name="Lapidus A."/>
            <person name="Glavina del Rio T."/>
            <person name="Dalin E."/>
            <person name="Tice H."/>
            <person name="Bruce D."/>
            <person name="Goodwin L."/>
            <person name="Pitluck S."/>
            <person name="Sims D."/>
            <person name="Brettin T."/>
            <person name="Detter J.C."/>
            <person name="Han C."/>
            <person name="Kuske C.R."/>
            <person name="Schmutz J."/>
            <person name="Larimer F."/>
            <person name="Land M."/>
            <person name="Hauser L."/>
            <person name="Kyrpides N."/>
            <person name="Lykidis A."/>
            <person name="Zhao J.-S."/>
            <person name="Richardson P."/>
        </authorList>
    </citation>
    <scope>NUCLEOTIDE SEQUENCE [LARGE SCALE GENOMIC DNA]</scope>
    <source>
        <strain>ATCC 51908 / MS32</strain>
    </source>
</reference>
<protein>
    <recommendedName>
        <fullName evidence="1">Small ribosomal subunit protein uS2</fullName>
    </recommendedName>
    <alternativeName>
        <fullName evidence="2">30S ribosomal protein S2</fullName>
    </alternativeName>
</protein>
<gene>
    <name evidence="1" type="primary">rpsB</name>
    <name type="ordered locus">Swoo_3281</name>
</gene>
<keyword id="KW-1185">Reference proteome</keyword>
<keyword id="KW-0687">Ribonucleoprotein</keyword>
<keyword id="KW-0689">Ribosomal protein</keyword>
<comment type="similarity">
    <text evidence="1">Belongs to the universal ribosomal protein uS2 family.</text>
</comment>
<proteinExistence type="inferred from homology"/>
<organism>
    <name type="scientific">Shewanella woodyi (strain ATCC 51908 / MS32)</name>
    <dbReference type="NCBI Taxonomy" id="392500"/>
    <lineage>
        <taxon>Bacteria</taxon>
        <taxon>Pseudomonadati</taxon>
        <taxon>Pseudomonadota</taxon>
        <taxon>Gammaproteobacteria</taxon>
        <taxon>Alteromonadales</taxon>
        <taxon>Shewanellaceae</taxon>
        <taxon>Shewanella</taxon>
    </lineage>
</organism>
<dbReference type="EMBL" id="CP000961">
    <property type="protein sequence ID" value="ACA87551.1"/>
    <property type="molecule type" value="Genomic_DNA"/>
</dbReference>
<dbReference type="RefSeq" id="WP_012325887.1">
    <property type="nucleotide sequence ID" value="NC_010506.1"/>
</dbReference>
<dbReference type="SMR" id="B1KNU3"/>
<dbReference type="STRING" id="392500.Swoo_3281"/>
<dbReference type="KEGG" id="swd:Swoo_3281"/>
<dbReference type="eggNOG" id="COG0052">
    <property type="taxonomic scope" value="Bacteria"/>
</dbReference>
<dbReference type="HOGENOM" id="CLU_040318_1_2_6"/>
<dbReference type="Proteomes" id="UP000002168">
    <property type="component" value="Chromosome"/>
</dbReference>
<dbReference type="GO" id="GO:0022627">
    <property type="term" value="C:cytosolic small ribosomal subunit"/>
    <property type="evidence" value="ECO:0007669"/>
    <property type="project" value="TreeGrafter"/>
</dbReference>
<dbReference type="GO" id="GO:0003735">
    <property type="term" value="F:structural constituent of ribosome"/>
    <property type="evidence" value="ECO:0007669"/>
    <property type="project" value="InterPro"/>
</dbReference>
<dbReference type="GO" id="GO:0006412">
    <property type="term" value="P:translation"/>
    <property type="evidence" value="ECO:0007669"/>
    <property type="project" value="UniProtKB-UniRule"/>
</dbReference>
<dbReference type="CDD" id="cd01425">
    <property type="entry name" value="RPS2"/>
    <property type="match status" value="1"/>
</dbReference>
<dbReference type="FunFam" id="1.10.287.610:FF:000001">
    <property type="entry name" value="30S ribosomal protein S2"/>
    <property type="match status" value="1"/>
</dbReference>
<dbReference type="Gene3D" id="3.40.50.10490">
    <property type="entry name" value="Glucose-6-phosphate isomerase like protein, domain 1"/>
    <property type="match status" value="1"/>
</dbReference>
<dbReference type="Gene3D" id="1.10.287.610">
    <property type="entry name" value="Helix hairpin bin"/>
    <property type="match status" value="1"/>
</dbReference>
<dbReference type="HAMAP" id="MF_00291_B">
    <property type="entry name" value="Ribosomal_uS2_B"/>
    <property type="match status" value="1"/>
</dbReference>
<dbReference type="InterPro" id="IPR001865">
    <property type="entry name" value="Ribosomal_uS2"/>
</dbReference>
<dbReference type="InterPro" id="IPR005706">
    <property type="entry name" value="Ribosomal_uS2_bac/mit/plastid"/>
</dbReference>
<dbReference type="InterPro" id="IPR018130">
    <property type="entry name" value="Ribosomal_uS2_CS"/>
</dbReference>
<dbReference type="InterPro" id="IPR023591">
    <property type="entry name" value="Ribosomal_uS2_flav_dom_sf"/>
</dbReference>
<dbReference type="NCBIfam" id="TIGR01011">
    <property type="entry name" value="rpsB_bact"/>
    <property type="match status" value="1"/>
</dbReference>
<dbReference type="PANTHER" id="PTHR12534">
    <property type="entry name" value="30S RIBOSOMAL PROTEIN S2 PROKARYOTIC AND ORGANELLAR"/>
    <property type="match status" value="1"/>
</dbReference>
<dbReference type="PANTHER" id="PTHR12534:SF0">
    <property type="entry name" value="SMALL RIBOSOMAL SUBUNIT PROTEIN US2M"/>
    <property type="match status" value="1"/>
</dbReference>
<dbReference type="Pfam" id="PF00318">
    <property type="entry name" value="Ribosomal_S2"/>
    <property type="match status" value="1"/>
</dbReference>
<dbReference type="PRINTS" id="PR00395">
    <property type="entry name" value="RIBOSOMALS2"/>
</dbReference>
<dbReference type="SUPFAM" id="SSF52313">
    <property type="entry name" value="Ribosomal protein S2"/>
    <property type="match status" value="1"/>
</dbReference>
<dbReference type="PROSITE" id="PS00962">
    <property type="entry name" value="RIBOSOMAL_S2_1"/>
    <property type="match status" value="1"/>
</dbReference>
<dbReference type="PROSITE" id="PS00963">
    <property type="entry name" value="RIBOSOMAL_S2_2"/>
    <property type="match status" value="1"/>
</dbReference>
<feature type="chain" id="PRO_1000115058" description="Small ribosomal subunit protein uS2">
    <location>
        <begin position="1"/>
        <end position="242"/>
    </location>
</feature>
<sequence>MTTVSMRDMLQAGVHFGHQTRYWNPKMKPFIFGARNGVHIINLEHTVPMFNEALAFISNVASKKGKVLFVGTKRAASEAIKESAISCDQYYVDHRWLGGMLTNWKTVRQSIKRLKDLESQSVDGTFDKLTKKEALMRTRELEKLEKSLGGIKNMGGLPDVIFVIGADHEHIAIKEANNLGIPVVAVVDTNSSPDGINYIVPGNDDAMRSIRLYTESVAAAAKAGRGQDLAVQAEQDGFVEAE</sequence>